<comment type="function">
    <text evidence="1">Catalyzes the reversible oxidation of malate to oxaloacetate.</text>
</comment>
<comment type="catalytic activity">
    <reaction evidence="1">
        <text>(S)-malate + NAD(+) = oxaloacetate + NADH + H(+)</text>
        <dbReference type="Rhea" id="RHEA:21432"/>
        <dbReference type="ChEBI" id="CHEBI:15378"/>
        <dbReference type="ChEBI" id="CHEBI:15589"/>
        <dbReference type="ChEBI" id="CHEBI:16452"/>
        <dbReference type="ChEBI" id="CHEBI:57540"/>
        <dbReference type="ChEBI" id="CHEBI:57945"/>
        <dbReference type="EC" id="1.1.1.37"/>
    </reaction>
</comment>
<comment type="similarity">
    <text evidence="1">Belongs to the LDH/MDH superfamily. MDH type 3 family.</text>
</comment>
<keyword id="KW-0520">NAD</keyword>
<keyword id="KW-0560">Oxidoreductase</keyword>
<keyword id="KW-1185">Reference proteome</keyword>
<keyword id="KW-0816">Tricarboxylic acid cycle</keyword>
<sequence length="312" mass="32915">MAQRKKIALIGAGQIGGTLALLAGQKELGDVVLVDIMEGVAKGKALDLQETRGVGKWDVDVTGGGTTDYSVIRDADVCIVTAGVPRKPGMSREDLLKVNLDAITKVAHGIKQYAPNAFVIVITNPLDSMVYAMYKVTGFPKNRVVGMAGVLDTARFQYFVGDAAGVSPQDVQAMVLGGHGDDMVPLLRYSSVAGVPLTRLLDKAKLDAIVERTRKGGGEIVALLGTGSAFYAPAASAIAMAESYLRDKKRVLPCSALLEGQYGVKGLFVGVPVVIGAGGVERVLELELNDDERAMLQRSVDSVKKSVAETKL</sequence>
<name>MDH1_ANADE</name>
<proteinExistence type="inferred from homology"/>
<evidence type="ECO:0000255" key="1">
    <source>
        <dbReference type="HAMAP-Rule" id="MF_00487"/>
    </source>
</evidence>
<protein>
    <recommendedName>
        <fullName evidence="1">Malate dehydrogenase 1</fullName>
        <ecNumber evidence="1">1.1.1.37</ecNumber>
    </recommendedName>
</protein>
<feature type="chain" id="PRO_0000241939" description="Malate dehydrogenase 1">
    <location>
        <begin position="1"/>
        <end position="312"/>
    </location>
</feature>
<feature type="active site" description="Proton acceptor" evidence="1">
    <location>
        <position position="179"/>
    </location>
</feature>
<feature type="binding site" evidence="1">
    <location>
        <begin position="11"/>
        <end position="16"/>
    </location>
    <ligand>
        <name>NAD(+)</name>
        <dbReference type="ChEBI" id="CHEBI:57540"/>
    </ligand>
</feature>
<feature type="binding site" evidence="1">
    <location>
        <position position="35"/>
    </location>
    <ligand>
        <name>NAD(+)</name>
        <dbReference type="ChEBI" id="CHEBI:57540"/>
    </ligand>
</feature>
<feature type="binding site" evidence="1">
    <location>
        <position position="86"/>
    </location>
    <ligand>
        <name>substrate</name>
    </ligand>
</feature>
<feature type="binding site" evidence="1">
    <location>
        <position position="92"/>
    </location>
    <ligand>
        <name>substrate</name>
    </ligand>
</feature>
<feature type="binding site" evidence="1">
    <location>
        <position position="99"/>
    </location>
    <ligand>
        <name>NAD(+)</name>
        <dbReference type="ChEBI" id="CHEBI:57540"/>
    </ligand>
</feature>
<feature type="binding site" evidence="1">
    <location>
        <begin position="122"/>
        <end position="124"/>
    </location>
    <ligand>
        <name>NAD(+)</name>
        <dbReference type="ChEBI" id="CHEBI:57540"/>
    </ligand>
</feature>
<feature type="binding site" evidence="1">
    <location>
        <position position="124"/>
    </location>
    <ligand>
        <name>substrate</name>
    </ligand>
</feature>
<feature type="binding site" evidence="1">
    <location>
        <position position="155"/>
    </location>
    <ligand>
        <name>substrate</name>
    </ligand>
</feature>
<reference key="1">
    <citation type="submission" date="2006-01" db="EMBL/GenBank/DDBJ databases">
        <title>Complete sequence of Anaeromyxobacter dehalogenans 2CP-C.</title>
        <authorList>
            <person name="Copeland A."/>
            <person name="Lucas S."/>
            <person name="Lapidus A."/>
            <person name="Barry K."/>
            <person name="Detter J.C."/>
            <person name="Glavina T."/>
            <person name="Hammon N."/>
            <person name="Israni S."/>
            <person name="Pitluck S."/>
            <person name="Brettin T."/>
            <person name="Bruce D."/>
            <person name="Han C."/>
            <person name="Tapia R."/>
            <person name="Gilna P."/>
            <person name="Kiss H."/>
            <person name="Schmutz J."/>
            <person name="Larimer F."/>
            <person name="Land M."/>
            <person name="Kyrpides N."/>
            <person name="Anderson I."/>
            <person name="Sanford R.A."/>
            <person name="Ritalahti K.M."/>
            <person name="Thomas H.S."/>
            <person name="Kirby J.R."/>
            <person name="Zhulin I.B."/>
            <person name="Loeffler F.E."/>
            <person name="Richardson P."/>
        </authorList>
    </citation>
    <scope>NUCLEOTIDE SEQUENCE [LARGE SCALE GENOMIC DNA]</scope>
    <source>
        <strain>2CP-C</strain>
    </source>
</reference>
<accession>Q2IIC2</accession>
<gene>
    <name evidence="1" type="primary">mdh1</name>
    <name type="ordered locus">Adeh_1626</name>
</gene>
<dbReference type="EC" id="1.1.1.37" evidence="1"/>
<dbReference type="EMBL" id="CP000251">
    <property type="protein sequence ID" value="ABC81399.1"/>
    <property type="molecule type" value="Genomic_DNA"/>
</dbReference>
<dbReference type="SMR" id="Q2IIC2"/>
<dbReference type="STRING" id="290397.Adeh_1626"/>
<dbReference type="KEGG" id="ade:Adeh_1626"/>
<dbReference type="eggNOG" id="COG0039">
    <property type="taxonomic scope" value="Bacteria"/>
</dbReference>
<dbReference type="HOGENOM" id="CLU_045401_2_1_7"/>
<dbReference type="OrthoDB" id="9802969at2"/>
<dbReference type="Proteomes" id="UP000001935">
    <property type="component" value="Chromosome"/>
</dbReference>
<dbReference type="GO" id="GO:0004459">
    <property type="term" value="F:L-lactate dehydrogenase activity"/>
    <property type="evidence" value="ECO:0007669"/>
    <property type="project" value="TreeGrafter"/>
</dbReference>
<dbReference type="GO" id="GO:0030060">
    <property type="term" value="F:L-malate dehydrogenase (NAD+) activity"/>
    <property type="evidence" value="ECO:0007669"/>
    <property type="project" value="UniProtKB-UniRule"/>
</dbReference>
<dbReference type="GO" id="GO:0006089">
    <property type="term" value="P:lactate metabolic process"/>
    <property type="evidence" value="ECO:0007669"/>
    <property type="project" value="TreeGrafter"/>
</dbReference>
<dbReference type="GO" id="GO:0006099">
    <property type="term" value="P:tricarboxylic acid cycle"/>
    <property type="evidence" value="ECO:0007669"/>
    <property type="project" value="UniProtKB-UniRule"/>
</dbReference>
<dbReference type="CDD" id="cd01339">
    <property type="entry name" value="LDH-like_MDH"/>
    <property type="match status" value="1"/>
</dbReference>
<dbReference type="FunFam" id="3.40.50.720:FF:000018">
    <property type="entry name" value="Malate dehydrogenase"/>
    <property type="match status" value="1"/>
</dbReference>
<dbReference type="FunFam" id="3.90.110.10:FF:000004">
    <property type="entry name" value="Malate dehydrogenase"/>
    <property type="match status" value="1"/>
</dbReference>
<dbReference type="Gene3D" id="3.90.110.10">
    <property type="entry name" value="Lactate dehydrogenase/glycoside hydrolase, family 4, C-terminal"/>
    <property type="match status" value="1"/>
</dbReference>
<dbReference type="Gene3D" id="3.40.50.720">
    <property type="entry name" value="NAD(P)-binding Rossmann-like Domain"/>
    <property type="match status" value="1"/>
</dbReference>
<dbReference type="HAMAP" id="MF_00487">
    <property type="entry name" value="Malate_dehydrog_3"/>
    <property type="match status" value="1"/>
</dbReference>
<dbReference type="InterPro" id="IPR001557">
    <property type="entry name" value="L-lactate/malate_DH"/>
</dbReference>
<dbReference type="InterPro" id="IPR022383">
    <property type="entry name" value="Lactate/malate_DH_C"/>
</dbReference>
<dbReference type="InterPro" id="IPR001236">
    <property type="entry name" value="Lactate/malate_DH_N"/>
</dbReference>
<dbReference type="InterPro" id="IPR015955">
    <property type="entry name" value="Lactate_DH/Glyco_Ohase_4_C"/>
</dbReference>
<dbReference type="InterPro" id="IPR011275">
    <property type="entry name" value="Malate_DH_type3"/>
</dbReference>
<dbReference type="InterPro" id="IPR036291">
    <property type="entry name" value="NAD(P)-bd_dom_sf"/>
</dbReference>
<dbReference type="NCBIfam" id="TIGR01763">
    <property type="entry name" value="MalateDH_bact"/>
    <property type="match status" value="1"/>
</dbReference>
<dbReference type="NCBIfam" id="NF004863">
    <property type="entry name" value="PRK06223.1"/>
    <property type="match status" value="1"/>
</dbReference>
<dbReference type="PANTHER" id="PTHR43128">
    <property type="entry name" value="L-2-HYDROXYCARBOXYLATE DEHYDROGENASE (NAD(P)(+))"/>
    <property type="match status" value="1"/>
</dbReference>
<dbReference type="PANTHER" id="PTHR43128:SF16">
    <property type="entry name" value="L-LACTATE DEHYDROGENASE"/>
    <property type="match status" value="1"/>
</dbReference>
<dbReference type="Pfam" id="PF02866">
    <property type="entry name" value="Ldh_1_C"/>
    <property type="match status" value="1"/>
</dbReference>
<dbReference type="Pfam" id="PF00056">
    <property type="entry name" value="Ldh_1_N"/>
    <property type="match status" value="1"/>
</dbReference>
<dbReference type="PIRSF" id="PIRSF000102">
    <property type="entry name" value="Lac_mal_DH"/>
    <property type="match status" value="1"/>
</dbReference>
<dbReference type="PRINTS" id="PR00086">
    <property type="entry name" value="LLDHDRGNASE"/>
</dbReference>
<dbReference type="SUPFAM" id="SSF56327">
    <property type="entry name" value="LDH C-terminal domain-like"/>
    <property type="match status" value="1"/>
</dbReference>
<dbReference type="SUPFAM" id="SSF51735">
    <property type="entry name" value="NAD(P)-binding Rossmann-fold domains"/>
    <property type="match status" value="1"/>
</dbReference>
<organism>
    <name type="scientific">Anaeromyxobacter dehalogenans (strain 2CP-C)</name>
    <dbReference type="NCBI Taxonomy" id="290397"/>
    <lineage>
        <taxon>Bacteria</taxon>
        <taxon>Pseudomonadati</taxon>
        <taxon>Myxococcota</taxon>
        <taxon>Myxococcia</taxon>
        <taxon>Myxococcales</taxon>
        <taxon>Cystobacterineae</taxon>
        <taxon>Anaeromyxobacteraceae</taxon>
        <taxon>Anaeromyxobacter</taxon>
    </lineage>
</organism>